<protein>
    <recommendedName>
        <fullName>Uncharacterized protein 3</fullName>
    </recommendedName>
</protein>
<feature type="chain" id="PRO_0000317785" description="Uncharacterized protein 3">
    <location>
        <begin position="1"/>
        <end position="178"/>
    </location>
</feature>
<organismHost>
    <name type="scientific">Cestrum parqui</name>
    <dbReference type="NCBI Taxonomy" id="142762"/>
</organismHost>
<sequence>MGLEDSVKQLQGAIEELKGLISSVEEMKEIVKRESEDSIQEYLRSFLEPLAKDNPLFTQKHIFGKYKPERNEKKCSHIDGNYWPHLKHTFHPQLNYIVDLLEEIRNCTCKEKQHDKQLVPLPTPAESSKKPEECTNNCNCDKCRQKEKCLTIGEMSELLQNLIKIPKQSKYLEKPALF</sequence>
<proteinExistence type="predicted"/>
<reference key="1">
    <citation type="journal article" date="2003" name="J. Gen. Virol.">
        <title>Characterization of Cestrum yellow leaf curling virus: a new member of the family Caulimoviridae.</title>
        <authorList>
            <person name="Stavolone L."/>
            <person name="Ragozzino A."/>
            <person name="Hohn T."/>
        </authorList>
    </citation>
    <scope>NUCLEOTIDE SEQUENCE [GENOMIC DNA]</scope>
</reference>
<accession>Q7TD10</accession>
<gene>
    <name type="ORF">ORF III</name>
</gene>
<name>Y3_CYLCV</name>
<dbReference type="EMBL" id="AF364175">
    <property type="protein sequence ID" value="AAP78922.1"/>
    <property type="molecule type" value="Genomic_DNA"/>
</dbReference>
<dbReference type="RefSeq" id="NP_861408.1">
    <property type="nucleotide sequence ID" value="NC_004324.3"/>
</dbReference>
<dbReference type="SMR" id="Q7TD10"/>
<dbReference type="KEGG" id="vg:1732959"/>
<dbReference type="Proteomes" id="UP000007763">
    <property type="component" value="Genome"/>
</dbReference>
<keyword id="KW-1185">Reference proteome</keyword>
<organism>
    <name type="scientific">Cestrum yellow leaf curling virus</name>
    <name type="common">CmYLCV</name>
    <dbReference type="NCBI Taxonomy" id="175814"/>
    <lineage>
        <taxon>Viruses</taxon>
        <taxon>Riboviria</taxon>
        <taxon>Pararnavirae</taxon>
        <taxon>Artverviricota</taxon>
        <taxon>Revtraviricetes</taxon>
        <taxon>Ortervirales</taxon>
        <taxon>Caulimoviridae</taxon>
        <taxon>Soymovirus</taxon>
        <taxon>Soymovirus crispocestri</taxon>
    </lineage>
</organism>